<dbReference type="EC" id="6.1.1.5" evidence="1"/>
<dbReference type="EMBL" id="CP001068">
    <property type="protein sequence ID" value="ACD27851.1"/>
    <property type="molecule type" value="Genomic_DNA"/>
</dbReference>
<dbReference type="SMR" id="B2UAQ4"/>
<dbReference type="STRING" id="402626.Rpic_2726"/>
<dbReference type="KEGG" id="rpi:Rpic_2726"/>
<dbReference type="PATRIC" id="fig|402626.5.peg.3862"/>
<dbReference type="eggNOG" id="COG0060">
    <property type="taxonomic scope" value="Bacteria"/>
</dbReference>
<dbReference type="HOGENOM" id="CLU_001493_7_1_4"/>
<dbReference type="GO" id="GO:0005829">
    <property type="term" value="C:cytosol"/>
    <property type="evidence" value="ECO:0007669"/>
    <property type="project" value="TreeGrafter"/>
</dbReference>
<dbReference type="GO" id="GO:0002161">
    <property type="term" value="F:aminoacyl-tRNA deacylase activity"/>
    <property type="evidence" value="ECO:0007669"/>
    <property type="project" value="InterPro"/>
</dbReference>
<dbReference type="GO" id="GO:0005524">
    <property type="term" value="F:ATP binding"/>
    <property type="evidence" value="ECO:0007669"/>
    <property type="project" value="UniProtKB-UniRule"/>
</dbReference>
<dbReference type="GO" id="GO:0004822">
    <property type="term" value="F:isoleucine-tRNA ligase activity"/>
    <property type="evidence" value="ECO:0007669"/>
    <property type="project" value="UniProtKB-UniRule"/>
</dbReference>
<dbReference type="GO" id="GO:0000049">
    <property type="term" value="F:tRNA binding"/>
    <property type="evidence" value="ECO:0007669"/>
    <property type="project" value="InterPro"/>
</dbReference>
<dbReference type="GO" id="GO:0008270">
    <property type="term" value="F:zinc ion binding"/>
    <property type="evidence" value="ECO:0007669"/>
    <property type="project" value="UniProtKB-UniRule"/>
</dbReference>
<dbReference type="GO" id="GO:0006428">
    <property type="term" value="P:isoleucyl-tRNA aminoacylation"/>
    <property type="evidence" value="ECO:0007669"/>
    <property type="project" value="UniProtKB-UniRule"/>
</dbReference>
<dbReference type="CDD" id="cd07960">
    <property type="entry name" value="Anticodon_Ia_Ile_BEm"/>
    <property type="match status" value="1"/>
</dbReference>
<dbReference type="CDD" id="cd00818">
    <property type="entry name" value="IleRS_core"/>
    <property type="match status" value="1"/>
</dbReference>
<dbReference type="FunFam" id="3.40.50.620:FF:000042">
    <property type="entry name" value="Isoleucine--tRNA ligase"/>
    <property type="match status" value="1"/>
</dbReference>
<dbReference type="FunFam" id="3.40.50.620:FF:000048">
    <property type="entry name" value="Isoleucine--tRNA ligase"/>
    <property type="match status" value="1"/>
</dbReference>
<dbReference type="Gene3D" id="1.10.730.20">
    <property type="match status" value="1"/>
</dbReference>
<dbReference type="Gene3D" id="3.40.50.620">
    <property type="entry name" value="HUPs"/>
    <property type="match status" value="2"/>
</dbReference>
<dbReference type="Gene3D" id="3.90.740.10">
    <property type="entry name" value="Valyl/Leucyl/Isoleucyl-tRNA synthetase, editing domain"/>
    <property type="match status" value="1"/>
</dbReference>
<dbReference type="HAMAP" id="MF_02002">
    <property type="entry name" value="Ile_tRNA_synth_type1"/>
    <property type="match status" value="1"/>
</dbReference>
<dbReference type="InterPro" id="IPR001412">
    <property type="entry name" value="aa-tRNA-synth_I_CS"/>
</dbReference>
<dbReference type="InterPro" id="IPR002300">
    <property type="entry name" value="aa-tRNA-synth_Ia"/>
</dbReference>
<dbReference type="InterPro" id="IPR033708">
    <property type="entry name" value="Anticodon_Ile_BEm"/>
</dbReference>
<dbReference type="InterPro" id="IPR002301">
    <property type="entry name" value="Ile-tRNA-ligase"/>
</dbReference>
<dbReference type="InterPro" id="IPR023585">
    <property type="entry name" value="Ile-tRNA-ligase_type1"/>
</dbReference>
<dbReference type="InterPro" id="IPR050081">
    <property type="entry name" value="Ile-tRNA_ligase"/>
</dbReference>
<dbReference type="InterPro" id="IPR013155">
    <property type="entry name" value="M/V/L/I-tRNA-synth_anticd-bd"/>
</dbReference>
<dbReference type="InterPro" id="IPR014729">
    <property type="entry name" value="Rossmann-like_a/b/a_fold"/>
</dbReference>
<dbReference type="InterPro" id="IPR009080">
    <property type="entry name" value="tRNAsynth_Ia_anticodon-bd"/>
</dbReference>
<dbReference type="InterPro" id="IPR009008">
    <property type="entry name" value="Val/Leu/Ile-tRNA-synth_edit"/>
</dbReference>
<dbReference type="InterPro" id="IPR010663">
    <property type="entry name" value="Znf_FPG/IleRS"/>
</dbReference>
<dbReference type="NCBIfam" id="TIGR00392">
    <property type="entry name" value="ileS"/>
    <property type="match status" value="1"/>
</dbReference>
<dbReference type="PANTHER" id="PTHR42765:SF1">
    <property type="entry name" value="ISOLEUCINE--TRNA LIGASE, MITOCHONDRIAL"/>
    <property type="match status" value="1"/>
</dbReference>
<dbReference type="PANTHER" id="PTHR42765">
    <property type="entry name" value="SOLEUCYL-TRNA SYNTHETASE"/>
    <property type="match status" value="1"/>
</dbReference>
<dbReference type="Pfam" id="PF08264">
    <property type="entry name" value="Anticodon_1"/>
    <property type="match status" value="1"/>
</dbReference>
<dbReference type="Pfam" id="PF00133">
    <property type="entry name" value="tRNA-synt_1"/>
    <property type="match status" value="1"/>
</dbReference>
<dbReference type="Pfam" id="PF06827">
    <property type="entry name" value="zf-FPG_IleRS"/>
    <property type="match status" value="1"/>
</dbReference>
<dbReference type="PRINTS" id="PR00984">
    <property type="entry name" value="TRNASYNTHILE"/>
</dbReference>
<dbReference type="SUPFAM" id="SSF47323">
    <property type="entry name" value="Anticodon-binding domain of a subclass of class I aminoacyl-tRNA synthetases"/>
    <property type="match status" value="1"/>
</dbReference>
<dbReference type="SUPFAM" id="SSF52374">
    <property type="entry name" value="Nucleotidylyl transferase"/>
    <property type="match status" value="1"/>
</dbReference>
<dbReference type="SUPFAM" id="SSF50677">
    <property type="entry name" value="ValRS/IleRS/LeuRS editing domain"/>
    <property type="match status" value="1"/>
</dbReference>
<dbReference type="PROSITE" id="PS00178">
    <property type="entry name" value="AA_TRNA_LIGASE_I"/>
    <property type="match status" value="1"/>
</dbReference>
<evidence type="ECO:0000255" key="1">
    <source>
        <dbReference type="HAMAP-Rule" id="MF_02002"/>
    </source>
</evidence>
<organism>
    <name type="scientific">Ralstonia pickettii (strain 12J)</name>
    <dbReference type="NCBI Taxonomy" id="402626"/>
    <lineage>
        <taxon>Bacteria</taxon>
        <taxon>Pseudomonadati</taxon>
        <taxon>Pseudomonadota</taxon>
        <taxon>Betaproteobacteria</taxon>
        <taxon>Burkholderiales</taxon>
        <taxon>Burkholderiaceae</taxon>
        <taxon>Ralstonia</taxon>
    </lineage>
</organism>
<proteinExistence type="inferred from homology"/>
<keyword id="KW-0030">Aminoacyl-tRNA synthetase</keyword>
<keyword id="KW-0067">ATP-binding</keyword>
<keyword id="KW-0963">Cytoplasm</keyword>
<keyword id="KW-0436">Ligase</keyword>
<keyword id="KW-0479">Metal-binding</keyword>
<keyword id="KW-0547">Nucleotide-binding</keyword>
<keyword id="KW-0648">Protein biosynthesis</keyword>
<keyword id="KW-0862">Zinc</keyword>
<comment type="function">
    <text evidence="1">Catalyzes the attachment of isoleucine to tRNA(Ile). As IleRS can inadvertently accommodate and process structurally similar amino acids such as valine, to avoid such errors it has two additional distinct tRNA(Ile)-dependent editing activities. One activity is designated as 'pretransfer' editing and involves the hydrolysis of activated Val-AMP. The other activity is designated 'posttransfer' editing and involves deacylation of mischarged Val-tRNA(Ile).</text>
</comment>
<comment type="catalytic activity">
    <reaction evidence="1">
        <text>tRNA(Ile) + L-isoleucine + ATP = L-isoleucyl-tRNA(Ile) + AMP + diphosphate</text>
        <dbReference type="Rhea" id="RHEA:11060"/>
        <dbReference type="Rhea" id="RHEA-COMP:9666"/>
        <dbReference type="Rhea" id="RHEA-COMP:9695"/>
        <dbReference type="ChEBI" id="CHEBI:30616"/>
        <dbReference type="ChEBI" id="CHEBI:33019"/>
        <dbReference type="ChEBI" id="CHEBI:58045"/>
        <dbReference type="ChEBI" id="CHEBI:78442"/>
        <dbReference type="ChEBI" id="CHEBI:78528"/>
        <dbReference type="ChEBI" id="CHEBI:456215"/>
        <dbReference type="EC" id="6.1.1.5"/>
    </reaction>
</comment>
<comment type="cofactor">
    <cofactor evidence="1">
        <name>Zn(2+)</name>
        <dbReference type="ChEBI" id="CHEBI:29105"/>
    </cofactor>
    <text evidence="1">Binds 1 zinc ion per subunit.</text>
</comment>
<comment type="subunit">
    <text evidence="1">Monomer.</text>
</comment>
<comment type="subcellular location">
    <subcellularLocation>
        <location evidence="1">Cytoplasm</location>
    </subcellularLocation>
</comment>
<comment type="domain">
    <text evidence="1">IleRS has two distinct active sites: one for aminoacylation and one for editing. The misactivated valine is translocated from the active site to the editing site, which sterically excludes the correctly activated isoleucine. The single editing site contains two valyl binding pockets, one specific for each substrate (Val-AMP or Val-tRNA(Ile)).</text>
</comment>
<comment type="similarity">
    <text evidence="1">Belongs to the class-I aminoacyl-tRNA synthetase family. IleS type 1 subfamily.</text>
</comment>
<feature type="chain" id="PRO_1000189190" description="Isoleucine--tRNA ligase">
    <location>
        <begin position="1"/>
        <end position="959"/>
    </location>
</feature>
<feature type="short sequence motif" description="'HIGH' region">
    <location>
        <begin position="66"/>
        <end position="76"/>
    </location>
</feature>
<feature type="short sequence motif" description="'KMSKS' region">
    <location>
        <begin position="633"/>
        <end position="637"/>
    </location>
</feature>
<feature type="binding site" evidence="1">
    <location>
        <position position="592"/>
    </location>
    <ligand>
        <name>L-isoleucyl-5'-AMP</name>
        <dbReference type="ChEBI" id="CHEBI:178002"/>
    </ligand>
</feature>
<feature type="binding site" evidence="1">
    <location>
        <position position="636"/>
    </location>
    <ligand>
        <name>ATP</name>
        <dbReference type="ChEBI" id="CHEBI:30616"/>
    </ligand>
</feature>
<feature type="binding site" evidence="1">
    <location>
        <position position="922"/>
    </location>
    <ligand>
        <name>Zn(2+)</name>
        <dbReference type="ChEBI" id="CHEBI:29105"/>
    </ligand>
</feature>
<feature type="binding site" evidence="1">
    <location>
        <position position="925"/>
    </location>
    <ligand>
        <name>Zn(2+)</name>
        <dbReference type="ChEBI" id="CHEBI:29105"/>
    </ligand>
</feature>
<feature type="binding site" evidence="1">
    <location>
        <position position="942"/>
    </location>
    <ligand>
        <name>Zn(2+)</name>
        <dbReference type="ChEBI" id="CHEBI:29105"/>
    </ligand>
</feature>
<feature type="binding site" evidence="1">
    <location>
        <position position="945"/>
    </location>
    <ligand>
        <name>Zn(2+)</name>
        <dbReference type="ChEBI" id="CHEBI:29105"/>
    </ligand>
</feature>
<protein>
    <recommendedName>
        <fullName evidence="1">Isoleucine--tRNA ligase</fullName>
        <ecNumber evidence="1">6.1.1.5</ecNumber>
    </recommendedName>
    <alternativeName>
        <fullName evidence="1">Isoleucyl-tRNA synthetase</fullName>
        <shortName evidence="1">IleRS</shortName>
    </alternativeName>
</protein>
<gene>
    <name evidence="1" type="primary">ileS</name>
    <name type="ordered locus">Rpic_2726</name>
</gene>
<accession>B2UAQ4</accession>
<name>SYI_RALPJ</name>
<sequence length="959" mass="107152">MSDSKKPTPEKSKYPVNLLDTPFPMRGDLPKREPLWVKQWQDKQLYKKIRAARKGAKKFILHDGPPYANGDLHIGHAVNKILKDMVIKARGLTGLDAVYVPGWDCHGMPIEIQIEKQFGKGLPVKEVQEKARAYATGQIARQKADFERLGVLGDWADPYLTMNFRNEADEVRALGKILEKGYVFRGLKPVNWCFDCGSALAEAEVEYADRTDLSIDVGFPFADIDALASAFHVGADVLKAKPGWIVIWTTTPWTIPSNQALNLHPEIEYALVDTSRGLLIVAKERVEACLQSWKLEGTVLATCEGAALNGVRFHHPLAKMDAGYDRTSPVYLGDYVTIDTGTGIVHSAPAYGVEDFQSCKAHNMPDSEIINPVMGNGVYASTLPLFGGQMIWDANPKIVEVLRESGNLFDAHKYAHSYMHCWRHKTPIIYRATSQWFAGMDVQPNDGNATLRETALAGIDATAFYPSWGKQRLHNMIANRPDWTLSRQRQWGVPMAFFVHKETGALHPRTPELLEQVAQRIEKSGIEAWQTLDPRELLGDEADMYEKNRDTLDVWFDSGTTHWHVIRGSHAADLYDASADLPDGRLADLYLEGSDQHRGWFHSSLLTASMLYGKPPYKGLLTHGFTVDGEGRKMSKSIGNTIAPQEIANKMGAEIIRLWVASTDYSGELAISDEILKRVVEGYRRIRNTLRFLLANLTDYDHAKHALPTEQWLEIDRYAVALTDALQKEVLSHYDVYEFHPVVAKLQTFCSEDLGGFYLDVLKDRLYTTAPDSVARRSAQNALYHITQAMLHWMAPFLSFTAEEAWQVFAHGTEHTDTIFTSTYYNAPVPQGASALLEKWAAIRNVRGEVTKQLEALRIDGKIGSSLQAEVTVSAGESVHDALASLGDDLRFVLITSAAKLERAPEGGDLLITVVPSTHSKCERCWHYRADVGHDHAHPTLCKRCTDNLFGSGEQRSAA</sequence>
<reference key="1">
    <citation type="submission" date="2008-05" db="EMBL/GenBank/DDBJ databases">
        <title>Complete sequence of chromosome 1 of Ralstonia pickettii 12J.</title>
        <authorList>
            <person name="Lucas S."/>
            <person name="Copeland A."/>
            <person name="Lapidus A."/>
            <person name="Glavina del Rio T."/>
            <person name="Dalin E."/>
            <person name="Tice H."/>
            <person name="Bruce D."/>
            <person name="Goodwin L."/>
            <person name="Pitluck S."/>
            <person name="Meincke L."/>
            <person name="Brettin T."/>
            <person name="Detter J.C."/>
            <person name="Han C."/>
            <person name="Kuske C.R."/>
            <person name="Schmutz J."/>
            <person name="Larimer F."/>
            <person name="Land M."/>
            <person name="Hauser L."/>
            <person name="Kyrpides N."/>
            <person name="Mikhailova N."/>
            <person name="Marsh T."/>
            <person name="Richardson P."/>
        </authorList>
    </citation>
    <scope>NUCLEOTIDE SEQUENCE [LARGE SCALE GENOMIC DNA]</scope>
    <source>
        <strain>12J</strain>
    </source>
</reference>